<dbReference type="SMR" id="P0C8A4"/>
<dbReference type="Ensembl" id="ENSOANT00000070813.1">
    <property type="protein sequence ID" value="ENSOANP00000047685.1"/>
    <property type="gene ID" value="ENSOANG00000039902.1"/>
</dbReference>
<dbReference type="InParanoid" id="P0C8A4"/>
<dbReference type="OMA" id="CLVTWTQ"/>
<dbReference type="Proteomes" id="UP000002279">
    <property type="component" value="Chromosome X2"/>
</dbReference>
<dbReference type="Bgee" id="ENSOANG00000039902">
    <property type="expression patterns" value="Expressed in endometrium"/>
</dbReference>
<dbReference type="GO" id="GO:0005576">
    <property type="term" value="C:extracellular region"/>
    <property type="evidence" value="ECO:0007669"/>
    <property type="project" value="UniProtKB-SubCell"/>
</dbReference>
<dbReference type="GO" id="GO:0042742">
    <property type="term" value="P:defense response to bacterium"/>
    <property type="evidence" value="ECO:0007669"/>
    <property type="project" value="UniProtKB-KW"/>
</dbReference>
<accession>P0C8A4</accession>
<feature type="signal peptide" evidence="2">
    <location>
        <begin position="1"/>
        <end position="21"/>
    </location>
</feature>
<feature type="propeptide" id="PRO_0000352689" evidence="2">
    <location>
        <begin position="22"/>
        <end position="68"/>
    </location>
</feature>
<feature type="peptide" id="PRO_0000352690" description="Defensin-A4">
    <location>
        <begin position="71"/>
        <end position="99"/>
    </location>
</feature>
<feature type="disulfide bond" evidence="1">
    <location>
        <begin position="73"/>
        <end position="97"/>
    </location>
</feature>
<feature type="disulfide bond" evidence="1">
    <location>
        <begin position="75"/>
        <end position="89"/>
    </location>
</feature>
<feature type="disulfide bond" evidence="1">
    <location>
        <begin position="79"/>
        <end position="96"/>
    </location>
</feature>
<sequence length="99" mass="11216">MKTLCLLFAVLCLVTWTQARGAEVEENLTAQDGEVDIAGDNGDVQLTLNTDDFESFTLKTLTLGHPRVKRHSCVCRRICAARQVRKGRCSRRRRICCLY</sequence>
<organism>
    <name type="scientific">Ornithorhynchus anatinus</name>
    <name type="common">Duckbill platypus</name>
    <dbReference type="NCBI Taxonomy" id="9258"/>
    <lineage>
        <taxon>Eukaryota</taxon>
        <taxon>Metazoa</taxon>
        <taxon>Chordata</taxon>
        <taxon>Craniata</taxon>
        <taxon>Vertebrata</taxon>
        <taxon>Euteleostomi</taxon>
        <taxon>Mammalia</taxon>
        <taxon>Monotremata</taxon>
        <taxon>Ornithorhynchidae</taxon>
        <taxon>Ornithorhynchus</taxon>
    </lineage>
</organism>
<comment type="function">
    <text evidence="1">Has antimicrobial activity.</text>
</comment>
<comment type="subcellular location">
    <subcellularLocation>
        <location evidence="1">Secreted</location>
    </subcellularLocation>
</comment>
<comment type="tissue specificity">
    <text evidence="3">Lowly expressed in spleen, and expressed at lower levels in kidney and lung.</text>
</comment>
<comment type="similarity">
    <text evidence="6">Belongs to the alpha-defensin family.</text>
</comment>
<comment type="online information" name="Platypus resources">
    <link uri="https://www.twinkl.ch/search?q=platypus"/>
</comment>
<keyword id="KW-0044">Antibiotic</keyword>
<keyword id="KW-0929">Antimicrobial</keyword>
<keyword id="KW-0165">Cleavage on pair of basic residues</keyword>
<keyword id="KW-0211">Defensin</keyword>
<keyword id="KW-1015">Disulfide bond</keyword>
<keyword id="KW-1185">Reference proteome</keyword>
<keyword id="KW-0964">Secreted</keyword>
<keyword id="KW-0732">Signal</keyword>
<reference key="1">
    <citation type="journal article" date="2008" name="Genome Res.">
        <title>Defensins and the convergent evolution of platypus and reptile venom genes.</title>
        <authorList>
            <person name="Whittington C.M."/>
            <person name="Papenfuss A.T."/>
            <person name="Bansal P."/>
            <person name="Torres A.M."/>
            <person name="Wong E.S."/>
            <person name="Deakin J.E."/>
            <person name="Graves T."/>
            <person name="Alsop A."/>
            <person name="Schatzkamer K."/>
            <person name="Kremitzki C."/>
            <person name="Ponting C.P."/>
            <person name="Temple-Smith P."/>
            <person name="Warren W.C."/>
            <person name="Kuchel P.W."/>
            <person name="Belov K."/>
        </authorList>
    </citation>
    <scope>NUCLEOTIDE SEQUENCE [MRNA]</scope>
</reference>
<reference key="2">
    <citation type="journal article" date="2008" name="Toxicon">
        <title>Expression patterns of platypus defensin and related venom genes across a range of tissue types reveal the possibility of broader functions for OvDLPs than previously suspected.</title>
        <authorList>
            <person name="Whittington C.M."/>
            <person name="Papenfuss A.T."/>
            <person name="Kuchel P.W."/>
            <person name="Belov K."/>
        </authorList>
    </citation>
    <scope>TISSUE SPECIFICITY</scope>
</reference>
<name>DEFA4_ORNAN</name>
<protein>
    <recommendedName>
        <fullName evidence="7 8">Defensin-A4</fullName>
        <shortName evidence="4">DefA4</shortName>
        <shortName evidence="5">OaDefA4</shortName>
    </recommendedName>
</protein>
<proteinExistence type="evidence at transcript level"/>
<evidence type="ECO:0000250" key="1"/>
<evidence type="ECO:0000255" key="2"/>
<evidence type="ECO:0000269" key="3">
    <source>
    </source>
</evidence>
<evidence type="ECO:0000303" key="4">
    <source>
    </source>
</evidence>
<evidence type="ECO:0000303" key="5">
    <source>
    </source>
</evidence>
<evidence type="ECO:0000305" key="6"/>
<evidence type="ECO:0000305" key="7">
    <source>
    </source>
</evidence>
<evidence type="ECO:0000305" key="8">
    <source>
    </source>
</evidence>